<name>PAPA1_MYCBP</name>
<organism>
    <name type="scientific">Mycobacterium bovis (strain BCG / Pasteur 1173P2)</name>
    <dbReference type="NCBI Taxonomy" id="410289"/>
    <lineage>
        <taxon>Bacteria</taxon>
        <taxon>Bacillati</taxon>
        <taxon>Actinomycetota</taxon>
        <taxon>Actinomycetes</taxon>
        <taxon>Mycobacteriales</taxon>
        <taxon>Mycobacteriaceae</taxon>
        <taxon>Mycobacterium</taxon>
        <taxon>Mycobacterium tuberculosis complex</taxon>
    </lineage>
</organism>
<proteinExistence type="inferred from homology"/>
<evidence type="ECO:0000250" key="1">
    <source>
        <dbReference type="UniProtKB" id="P9WIK9"/>
    </source>
</evidence>
<evidence type="ECO:0000305" key="2"/>
<keyword id="KW-0012">Acyltransferase</keyword>
<keyword id="KW-0808">Transferase</keyword>
<comment type="function">
    <text evidence="1">Catalyzes the acylation of trehalose-2-sulfate-2'-palmitate (SL659) by adding the (hydroxy)phthioceranoyl group at the 3'-position to yield the diacylated intermediate 2-palmitoyl-3-(C43)-phthioceranyl-alpha, alpha'-D-trehalose-2'-sulfate (SL1278).</text>
</comment>
<comment type="catalytic activity">
    <reaction evidence="1">
        <text>a (hydroxy)phthioceranyl-[(hydroxy)phthioceranic acid synthase] + 2'-palmitoyl/stearoyl-2-O-sulfo-alpha,alpha-trehalose = a 3'-(hydroxy)phthioceranyl-2'-palmitoyl/stearoyl-2-O-sulfo-alpha,alpha-trehalose + holo-[(hydroxy)phthioceranic acid synthase].</text>
        <dbReference type="EC" id="2.3.1.283"/>
    </reaction>
</comment>
<comment type="miscellaneous">
    <text>In strain BCG, the sulfolipid-1 (SL-1) is not synthesized.</text>
</comment>
<comment type="similarity">
    <text evidence="2">Belongs to the PapA acyltransferase family.</text>
</comment>
<dbReference type="EC" id="2.3.1.283" evidence="1"/>
<dbReference type="EMBL" id="AM408590">
    <property type="protein sequence ID" value="CAL73877.1"/>
    <property type="molecule type" value="Genomic_DNA"/>
</dbReference>
<dbReference type="RefSeq" id="WP_003899711.1">
    <property type="nucleotide sequence ID" value="NC_008769.1"/>
</dbReference>
<dbReference type="SMR" id="A1KQF9"/>
<dbReference type="KEGG" id="mbb:BCG_3887c"/>
<dbReference type="HOGENOM" id="CLU_034647_1_0_11"/>
<dbReference type="Proteomes" id="UP000001472">
    <property type="component" value="Chromosome"/>
</dbReference>
<dbReference type="GO" id="GO:0016746">
    <property type="term" value="F:acyltransferase activity"/>
    <property type="evidence" value="ECO:0007669"/>
    <property type="project" value="UniProtKB-KW"/>
</dbReference>
<dbReference type="GO" id="GO:0008610">
    <property type="term" value="P:lipid biosynthetic process"/>
    <property type="evidence" value="ECO:0007669"/>
    <property type="project" value="UniProtKB-ARBA"/>
</dbReference>
<dbReference type="FunFam" id="3.30.559.10:FF:000022">
    <property type="entry name" value="Trehalose-2-sulfate acyltransferase papA2"/>
    <property type="match status" value="1"/>
</dbReference>
<dbReference type="FunFam" id="3.30.559.30:FF:000007">
    <property type="entry name" value="Trehalose-2-sulfate acyltransferase papA2"/>
    <property type="match status" value="1"/>
</dbReference>
<dbReference type="Gene3D" id="3.30.559.10">
    <property type="entry name" value="Chloramphenicol acetyltransferase-like domain"/>
    <property type="match status" value="1"/>
</dbReference>
<dbReference type="Gene3D" id="3.30.559.30">
    <property type="entry name" value="Nonribosomal peptide synthetase, condensation domain"/>
    <property type="match status" value="1"/>
</dbReference>
<dbReference type="InterPro" id="IPR023213">
    <property type="entry name" value="CAT-like_dom_sf"/>
</dbReference>
<dbReference type="InterPro" id="IPR001242">
    <property type="entry name" value="Condensatn"/>
</dbReference>
<dbReference type="Pfam" id="PF00668">
    <property type="entry name" value="Condensation"/>
    <property type="match status" value="1"/>
</dbReference>
<dbReference type="SUPFAM" id="SSF52777">
    <property type="entry name" value="CoA-dependent acyltransferases"/>
    <property type="match status" value="2"/>
</dbReference>
<accession>A1KQF9</accession>
<feature type="chain" id="PRO_0000314657" description="2'-acyl-2-O-sulfo-trehalose (hydroxy)phthioceranyltransferase PapA1">
    <location>
        <begin position="1"/>
        <end position="511"/>
    </location>
</feature>
<protein>
    <recommendedName>
        <fullName evidence="1">2'-acyl-2-O-sulfo-trehalose (hydroxy)phthioceranyltransferase PapA1</fullName>
        <ecNumber evidence="1">2.3.1.283</ecNumber>
    </recommendedName>
    <alternativeName>
        <fullName>Polyketide synthase-associated protein A1</fullName>
    </alternativeName>
    <alternativeName>
        <fullName evidence="1">SL659 acyltransferase PapA1</fullName>
    </alternativeName>
</protein>
<sequence length="511" mass="56128">MRIGPVELSAVKDWDPAPGVLVSWHPTPASCAKALAAPVSAVPPSYVQARQIRSFSEQAARGLDHSRLLIASVEVFGHCDLRAMTYVINAHLRRHDTYRSWFELRDTDHIVRHSIADPADIEFVPTTHGEMTSADLRQHIVATPDSLHWDCFSFGVIQRADSFTFYASIDHLHADGQFVGVGLMEFQSMYTALIMGEPPIGLSEAGSYVDFCVRQHEYTSALTVDSPEVRAWIDFAEINNGTFPEFPLPLGDPSVRCGGDLLSMMLMDEQQTQRFESACMAANARFIGGMLACIAIAIHELTGADTYFGITPKDIRTPADLMTQGWFTGQIPVTVPVAGLSFNEIARIAQTSFDTGADLAKVPFERVVELSPSLRRPQPLFSLVNFFDAQVGPLSAVTKLFEGLNVGTYSDGRVTYPLSTMVGRFDETAASVLFPDNPVARESVTAYLRAIRSVCMRIANGGTAERVGNVVALSPGRRNNIERMTWRSCRAGDFIDICNLKVANVTVDREA</sequence>
<gene>
    <name type="primary">papA1</name>
    <name type="ordered locus">BCG_3887c</name>
</gene>
<reference key="1">
    <citation type="journal article" date="2007" name="Proc. Natl. Acad. Sci. U.S.A.">
        <title>Genome plasticity of BCG and impact on vaccine efficacy.</title>
        <authorList>
            <person name="Brosch R."/>
            <person name="Gordon S.V."/>
            <person name="Garnier T."/>
            <person name="Eiglmeier K."/>
            <person name="Frigui W."/>
            <person name="Valenti P."/>
            <person name="Dos Santos S."/>
            <person name="Duthoy S."/>
            <person name="Lacroix C."/>
            <person name="Garcia-Pelayo C."/>
            <person name="Inwald J.K."/>
            <person name="Golby P."/>
            <person name="Garcia J.N."/>
            <person name="Hewinson R.G."/>
            <person name="Behr M.A."/>
            <person name="Quail M.A."/>
            <person name="Churcher C."/>
            <person name="Barrell B.G."/>
            <person name="Parkhill J."/>
            <person name="Cole S.T."/>
        </authorList>
    </citation>
    <scope>NUCLEOTIDE SEQUENCE [LARGE SCALE GENOMIC DNA]</scope>
    <source>
        <strain>BCG / Pasteur 1173P2</strain>
    </source>
</reference>